<evidence type="ECO:0000255" key="1">
    <source>
        <dbReference type="HAMAP-Rule" id="MF_01177"/>
    </source>
</evidence>
<accession>Q8DCU1</accession>
<organism>
    <name type="scientific">Vibrio vulnificus (strain CMCP6)</name>
    <dbReference type="NCBI Taxonomy" id="216895"/>
    <lineage>
        <taxon>Bacteria</taxon>
        <taxon>Pseudomonadati</taxon>
        <taxon>Pseudomonadota</taxon>
        <taxon>Gammaproteobacteria</taxon>
        <taxon>Vibrionales</taxon>
        <taxon>Vibrionaceae</taxon>
        <taxon>Vibrio</taxon>
    </lineage>
</organism>
<protein>
    <recommendedName>
        <fullName evidence="1">HTH-type transcriptional repressor NsrR</fullName>
    </recommendedName>
</protein>
<dbReference type="EMBL" id="AE016795">
    <property type="protein sequence ID" value="AAO09757.1"/>
    <property type="molecule type" value="Genomic_DNA"/>
</dbReference>
<dbReference type="RefSeq" id="WP_011079284.1">
    <property type="nucleotide sequence ID" value="NC_004459.3"/>
</dbReference>
<dbReference type="SMR" id="Q8DCU1"/>
<dbReference type="KEGG" id="vvu:VV1_1302"/>
<dbReference type="HOGENOM" id="CLU_107144_2_1_6"/>
<dbReference type="Proteomes" id="UP000002275">
    <property type="component" value="Chromosome 1"/>
</dbReference>
<dbReference type="GO" id="GO:0005829">
    <property type="term" value="C:cytosol"/>
    <property type="evidence" value="ECO:0007669"/>
    <property type="project" value="TreeGrafter"/>
</dbReference>
<dbReference type="GO" id="GO:0051537">
    <property type="term" value="F:2 iron, 2 sulfur cluster binding"/>
    <property type="evidence" value="ECO:0007669"/>
    <property type="project" value="UniProtKB-KW"/>
</dbReference>
<dbReference type="GO" id="GO:0003700">
    <property type="term" value="F:DNA-binding transcription factor activity"/>
    <property type="evidence" value="ECO:0007669"/>
    <property type="project" value="UniProtKB-UniRule"/>
</dbReference>
<dbReference type="GO" id="GO:0003690">
    <property type="term" value="F:double-stranded DNA binding"/>
    <property type="evidence" value="ECO:0007669"/>
    <property type="project" value="UniProtKB-UniRule"/>
</dbReference>
<dbReference type="GO" id="GO:0005506">
    <property type="term" value="F:iron ion binding"/>
    <property type="evidence" value="ECO:0007669"/>
    <property type="project" value="UniProtKB-UniRule"/>
</dbReference>
<dbReference type="GO" id="GO:0045892">
    <property type="term" value="P:negative regulation of DNA-templated transcription"/>
    <property type="evidence" value="ECO:0007669"/>
    <property type="project" value="InterPro"/>
</dbReference>
<dbReference type="FunFam" id="1.10.10.10:FF:000105">
    <property type="entry name" value="HTH-type transcriptional repressor NsrR"/>
    <property type="match status" value="1"/>
</dbReference>
<dbReference type="Gene3D" id="1.10.10.10">
    <property type="entry name" value="Winged helix-like DNA-binding domain superfamily/Winged helix DNA-binding domain"/>
    <property type="match status" value="1"/>
</dbReference>
<dbReference type="HAMAP" id="MF_01177">
    <property type="entry name" value="HTH_type_NsrR"/>
    <property type="match status" value="1"/>
</dbReference>
<dbReference type="InterPro" id="IPR000944">
    <property type="entry name" value="Tscrpt_reg_Rrf2"/>
</dbReference>
<dbReference type="InterPro" id="IPR023761">
    <property type="entry name" value="Tscrpt_rep_HTH_NsrR"/>
</dbReference>
<dbReference type="InterPro" id="IPR036388">
    <property type="entry name" value="WH-like_DNA-bd_sf"/>
</dbReference>
<dbReference type="InterPro" id="IPR036390">
    <property type="entry name" value="WH_DNA-bd_sf"/>
</dbReference>
<dbReference type="NCBIfam" id="NF008240">
    <property type="entry name" value="PRK11014.1"/>
    <property type="match status" value="1"/>
</dbReference>
<dbReference type="NCBIfam" id="TIGR00738">
    <property type="entry name" value="rrf2_super"/>
    <property type="match status" value="1"/>
</dbReference>
<dbReference type="PANTHER" id="PTHR33221:SF4">
    <property type="entry name" value="HTH-TYPE TRANSCRIPTIONAL REPRESSOR NSRR"/>
    <property type="match status" value="1"/>
</dbReference>
<dbReference type="PANTHER" id="PTHR33221">
    <property type="entry name" value="WINGED HELIX-TURN-HELIX TRANSCRIPTIONAL REGULATOR, RRF2 FAMILY"/>
    <property type="match status" value="1"/>
</dbReference>
<dbReference type="Pfam" id="PF02082">
    <property type="entry name" value="Rrf2"/>
    <property type="match status" value="1"/>
</dbReference>
<dbReference type="SUPFAM" id="SSF46785">
    <property type="entry name" value="Winged helix' DNA-binding domain"/>
    <property type="match status" value="1"/>
</dbReference>
<dbReference type="PROSITE" id="PS51197">
    <property type="entry name" value="HTH_RRF2_2"/>
    <property type="match status" value="1"/>
</dbReference>
<sequence length="141" mass="15917">MQLTSFTDYALRTLIYLASLPDNEQTNITDVTELFGVSRNHMVKVINRLGQLNYIQTVRGKNGGIRLNRPAKTILVGEVVRDLEPLDLVNCSVEFCHITPACRLKERLYRAKLAFLAELDDCSIAELLDDNAELLILLQKA</sequence>
<keyword id="KW-0001">2Fe-2S</keyword>
<keyword id="KW-0238">DNA-binding</keyword>
<keyword id="KW-0408">Iron</keyword>
<keyword id="KW-0411">Iron-sulfur</keyword>
<keyword id="KW-0479">Metal-binding</keyword>
<keyword id="KW-0678">Repressor</keyword>
<keyword id="KW-0804">Transcription</keyword>
<keyword id="KW-0805">Transcription regulation</keyword>
<name>NSRR_VIBVU</name>
<proteinExistence type="inferred from homology"/>
<comment type="function">
    <text evidence="1">Nitric oxide-sensitive repressor of genes involved in protecting the cell against nitrosative stress. May require iron for activity.</text>
</comment>
<comment type="cofactor">
    <cofactor evidence="1">
        <name>[2Fe-2S] cluster</name>
        <dbReference type="ChEBI" id="CHEBI:190135"/>
    </cofactor>
    <text evidence="1">Binds 1 [2Fe-2S] cluster per subunit.</text>
</comment>
<gene>
    <name evidence="1" type="primary">nsrR</name>
    <name type="ordered locus">VV1_1302</name>
</gene>
<feature type="chain" id="PRO_0000268952" description="HTH-type transcriptional repressor NsrR">
    <location>
        <begin position="1"/>
        <end position="141"/>
    </location>
</feature>
<feature type="domain" description="HTH rrf2-type" evidence="1">
    <location>
        <begin position="2"/>
        <end position="129"/>
    </location>
</feature>
<feature type="DNA-binding region" description="H-T-H motif" evidence="1">
    <location>
        <begin position="28"/>
        <end position="51"/>
    </location>
</feature>
<feature type="binding site" evidence="1">
    <location>
        <position position="91"/>
    </location>
    <ligand>
        <name>[2Fe-2S] cluster</name>
        <dbReference type="ChEBI" id="CHEBI:190135"/>
    </ligand>
</feature>
<feature type="binding site" evidence="1">
    <location>
        <position position="96"/>
    </location>
    <ligand>
        <name>[2Fe-2S] cluster</name>
        <dbReference type="ChEBI" id="CHEBI:190135"/>
    </ligand>
</feature>
<feature type="binding site" evidence="1">
    <location>
        <position position="102"/>
    </location>
    <ligand>
        <name>[2Fe-2S] cluster</name>
        <dbReference type="ChEBI" id="CHEBI:190135"/>
    </ligand>
</feature>
<reference key="1">
    <citation type="submission" date="2002-12" db="EMBL/GenBank/DDBJ databases">
        <title>Complete genome sequence of Vibrio vulnificus CMCP6.</title>
        <authorList>
            <person name="Rhee J.H."/>
            <person name="Kim S.Y."/>
            <person name="Chung S.S."/>
            <person name="Kim J.J."/>
            <person name="Moon Y.H."/>
            <person name="Jeong H."/>
            <person name="Choy H.E."/>
        </authorList>
    </citation>
    <scope>NUCLEOTIDE SEQUENCE [LARGE SCALE GENOMIC DNA]</scope>
    <source>
        <strain>CMCP6</strain>
    </source>
</reference>